<gene>
    <name evidence="1" type="primary">psbL</name>
</gene>
<name>PSBL_LOBMA</name>
<sequence length="38" mass="4497">MTQSNPNEQNVELNRTSLYWGLLLIFVLAVLFSNYFFN</sequence>
<proteinExistence type="inferred from homology"/>
<keyword id="KW-0150">Chloroplast</keyword>
<keyword id="KW-0472">Membrane</keyword>
<keyword id="KW-0602">Photosynthesis</keyword>
<keyword id="KW-0604">Photosystem II</keyword>
<keyword id="KW-0934">Plastid</keyword>
<keyword id="KW-0674">Reaction center</keyword>
<keyword id="KW-0793">Thylakoid</keyword>
<keyword id="KW-0812">Transmembrane</keyword>
<keyword id="KW-1133">Transmembrane helix</keyword>
<organism>
    <name type="scientific">Lobularia maritima</name>
    <name type="common">Sweet alyssum</name>
    <name type="synonym">Alyssum maritimum</name>
    <dbReference type="NCBI Taxonomy" id="226051"/>
    <lineage>
        <taxon>Eukaryota</taxon>
        <taxon>Viridiplantae</taxon>
        <taxon>Streptophyta</taxon>
        <taxon>Embryophyta</taxon>
        <taxon>Tracheophyta</taxon>
        <taxon>Spermatophyta</taxon>
        <taxon>Magnoliopsida</taxon>
        <taxon>eudicotyledons</taxon>
        <taxon>Gunneridae</taxon>
        <taxon>Pentapetalae</taxon>
        <taxon>rosids</taxon>
        <taxon>malvids</taxon>
        <taxon>Brassicales</taxon>
        <taxon>Brassicaceae</taxon>
        <taxon>Anastaticeae</taxon>
        <taxon>Lobularia</taxon>
    </lineage>
</organism>
<accession>A4QLK9</accession>
<dbReference type="EMBL" id="AP009375">
    <property type="protein sequence ID" value="BAF50564.1"/>
    <property type="molecule type" value="Genomic_DNA"/>
</dbReference>
<dbReference type="RefSeq" id="YP_001123740.1">
    <property type="nucleotide sequence ID" value="NC_009274.1"/>
</dbReference>
<dbReference type="SMR" id="A4QLK9"/>
<dbReference type="GeneID" id="4964860"/>
<dbReference type="GO" id="GO:0009535">
    <property type="term" value="C:chloroplast thylakoid membrane"/>
    <property type="evidence" value="ECO:0007669"/>
    <property type="project" value="UniProtKB-SubCell"/>
</dbReference>
<dbReference type="GO" id="GO:0009539">
    <property type="term" value="C:photosystem II reaction center"/>
    <property type="evidence" value="ECO:0007669"/>
    <property type="project" value="InterPro"/>
</dbReference>
<dbReference type="GO" id="GO:0015979">
    <property type="term" value="P:photosynthesis"/>
    <property type="evidence" value="ECO:0007669"/>
    <property type="project" value="UniProtKB-UniRule"/>
</dbReference>
<dbReference type="HAMAP" id="MF_01317">
    <property type="entry name" value="PSII_PsbL"/>
    <property type="match status" value="1"/>
</dbReference>
<dbReference type="InterPro" id="IPR003372">
    <property type="entry name" value="PSII_PsbL"/>
</dbReference>
<dbReference type="InterPro" id="IPR037266">
    <property type="entry name" value="PSII_PsbL_sf"/>
</dbReference>
<dbReference type="NCBIfam" id="NF001972">
    <property type="entry name" value="PRK00753.1"/>
    <property type="match status" value="1"/>
</dbReference>
<dbReference type="Pfam" id="PF02419">
    <property type="entry name" value="PsbL"/>
    <property type="match status" value="1"/>
</dbReference>
<dbReference type="SUPFAM" id="SSF161017">
    <property type="entry name" value="Photosystem II reaction center protein L, PsbL"/>
    <property type="match status" value="1"/>
</dbReference>
<feature type="chain" id="PRO_0000306237" description="Photosystem II reaction center protein L">
    <location>
        <begin position="1"/>
        <end position="38"/>
    </location>
</feature>
<feature type="transmembrane region" description="Helical" evidence="1">
    <location>
        <begin position="17"/>
        <end position="37"/>
    </location>
</feature>
<evidence type="ECO:0000255" key="1">
    <source>
        <dbReference type="HAMAP-Rule" id="MF_01317"/>
    </source>
</evidence>
<comment type="function">
    <text evidence="1">One of the components of the core complex of photosystem II (PSII). PSII is a light-driven water:plastoquinone oxidoreductase that uses light energy to abstract electrons from H(2)O, generating O(2) and a proton gradient subsequently used for ATP formation. It consists of a core antenna complex that captures photons, and an electron transfer chain that converts photonic excitation into a charge separation. This subunit is found at the monomer-monomer interface and is required for correct PSII assembly and/or dimerization.</text>
</comment>
<comment type="subunit">
    <text evidence="1">PSII is composed of 1 copy each of membrane proteins PsbA, PsbB, PsbC, PsbD, PsbE, PsbF, PsbH, PsbI, PsbJ, PsbK, PsbL, PsbM, PsbT, PsbX, PsbY, PsbZ, Psb30/Ycf12, at least 3 peripheral proteins of the oxygen-evolving complex and a large number of cofactors. It forms dimeric complexes.</text>
</comment>
<comment type="subcellular location">
    <subcellularLocation>
        <location evidence="1">Plastid</location>
        <location evidence="1">Chloroplast thylakoid membrane</location>
        <topology evidence="1">Single-pass membrane protein</topology>
    </subcellularLocation>
</comment>
<comment type="similarity">
    <text evidence="1">Belongs to the PsbL family.</text>
</comment>
<protein>
    <recommendedName>
        <fullName evidence="1">Photosystem II reaction center protein L</fullName>
        <shortName evidence="1">PSII-L</shortName>
    </recommendedName>
</protein>
<geneLocation type="chloroplast"/>
<reference key="1">
    <citation type="submission" date="2007-03" db="EMBL/GenBank/DDBJ databases">
        <title>Sequencing analysis of Lobularia maritima chloroplast DNA.</title>
        <authorList>
            <person name="Hosouchi T."/>
            <person name="Tsuruoka H."/>
            <person name="Kotani H."/>
        </authorList>
    </citation>
    <scope>NUCLEOTIDE SEQUENCE [LARGE SCALE GENOMIC DNA]</scope>
</reference>